<organism>
    <name type="scientific">Nostoc sp. (strain PCC 7120 / SAG 25.82 / UTEX 2576)</name>
    <dbReference type="NCBI Taxonomy" id="103690"/>
    <lineage>
        <taxon>Bacteria</taxon>
        <taxon>Bacillati</taxon>
        <taxon>Cyanobacteriota</taxon>
        <taxon>Cyanophyceae</taxon>
        <taxon>Nostocales</taxon>
        <taxon>Nostocaceae</taxon>
        <taxon>Nostoc</taxon>
    </lineage>
</organism>
<dbReference type="EC" id="4.2.1.11" evidence="1"/>
<dbReference type="EMBL" id="BA000019">
    <property type="protein sequence ID" value="BAB75237.1"/>
    <property type="molecule type" value="Genomic_DNA"/>
</dbReference>
<dbReference type="PIR" id="AC2248">
    <property type="entry name" value="AC2248"/>
</dbReference>
<dbReference type="RefSeq" id="WP_010997688.1">
    <property type="nucleotide sequence ID" value="NZ_RSCN01000034.1"/>
</dbReference>
<dbReference type="SMR" id="Q8YRB0"/>
<dbReference type="STRING" id="103690.gene:10495579"/>
<dbReference type="KEGG" id="ana:all3538"/>
<dbReference type="eggNOG" id="COG0148">
    <property type="taxonomic scope" value="Bacteria"/>
</dbReference>
<dbReference type="OrthoDB" id="9804716at2"/>
<dbReference type="UniPathway" id="UPA00109">
    <property type="reaction ID" value="UER00187"/>
</dbReference>
<dbReference type="Proteomes" id="UP000002483">
    <property type="component" value="Chromosome"/>
</dbReference>
<dbReference type="GO" id="GO:0009986">
    <property type="term" value="C:cell surface"/>
    <property type="evidence" value="ECO:0007669"/>
    <property type="project" value="UniProtKB-SubCell"/>
</dbReference>
<dbReference type="GO" id="GO:0005576">
    <property type="term" value="C:extracellular region"/>
    <property type="evidence" value="ECO:0007669"/>
    <property type="project" value="UniProtKB-SubCell"/>
</dbReference>
<dbReference type="GO" id="GO:0000015">
    <property type="term" value="C:phosphopyruvate hydratase complex"/>
    <property type="evidence" value="ECO:0007669"/>
    <property type="project" value="InterPro"/>
</dbReference>
<dbReference type="GO" id="GO:0000287">
    <property type="term" value="F:magnesium ion binding"/>
    <property type="evidence" value="ECO:0007669"/>
    <property type="project" value="UniProtKB-UniRule"/>
</dbReference>
<dbReference type="GO" id="GO:0004634">
    <property type="term" value="F:phosphopyruvate hydratase activity"/>
    <property type="evidence" value="ECO:0007669"/>
    <property type="project" value="UniProtKB-UniRule"/>
</dbReference>
<dbReference type="GO" id="GO:0006096">
    <property type="term" value="P:glycolytic process"/>
    <property type="evidence" value="ECO:0007669"/>
    <property type="project" value="UniProtKB-UniRule"/>
</dbReference>
<dbReference type="CDD" id="cd03313">
    <property type="entry name" value="enolase"/>
    <property type="match status" value="1"/>
</dbReference>
<dbReference type="FunFam" id="3.20.20.120:FF:000001">
    <property type="entry name" value="Enolase"/>
    <property type="match status" value="1"/>
</dbReference>
<dbReference type="FunFam" id="3.30.390.10:FF:000001">
    <property type="entry name" value="Enolase"/>
    <property type="match status" value="1"/>
</dbReference>
<dbReference type="Gene3D" id="3.20.20.120">
    <property type="entry name" value="Enolase-like C-terminal domain"/>
    <property type="match status" value="1"/>
</dbReference>
<dbReference type="Gene3D" id="3.30.390.10">
    <property type="entry name" value="Enolase-like, N-terminal domain"/>
    <property type="match status" value="1"/>
</dbReference>
<dbReference type="HAMAP" id="MF_00318">
    <property type="entry name" value="Enolase"/>
    <property type="match status" value="1"/>
</dbReference>
<dbReference type="InterPro" id="IPR000941">
    <property type="entry name" value="Enolase"/>
</dbReference>
<dbReference type="InterPro" id="IPR036849">
    <property type="entry name" value="Enolase-like_C_sf"/>
</dbReference>
<dbReference type="InterPro" id="IPR029017">
    <property type="entry name" value="Enolase-like_N"/>
</dbReference>
<dbReference type="InterPro" id="IPR020810">
    <property type="entry name" value="Enolase_C"/>
</dbReference>
<dbReference type="InterPro" id="IPR020809">
    <property type="entry name" value="Enolase_CS"/>
</dbReference>
<dbReference type="InterPro" id="IPR020811">
    <property type="entry name" value="Enolase_N"/>
</dbReference>
<dbReference type="NCBIfam" id="TIGR01060">
    <property type="entry name" value="eno"/>
    <property type="match status" value="1"/>
</dbReference>
<dbReference type="PANTHER" id="PTHR11902">
    <property type="entry name" value="ENOLASE"/>
    <property type="match status" value="1"/>
</dbReference>
<dbReference type="PANTHER" id="PTHR11902:SF1">
    <property type="entry name" value="ENOLASE"/>
    <property type="match status" value="1"/>
</dbReference>
<dbReference type="Pfam" id="PF00113">
    <property type="entry name" value="Enolase_C"/>
    <property type="match status" value="1"/>
</dbReference>
<dbReference type="Pfam" id="PF03952">
    <property type="entry name" value="Enolase_N"/>
    <property type="match status" value="1"/>
</dbReference>
<dbReference type="PIRSF" id="PIRSF001400">
    <property type="entry name" value="Enolase"/>
    <property type="match status" value="1"/>
</dbReference>
<dbReference type="PRINTS" id="PR00148">
    <property type="entry name" value="ENOLASE"/>
</dbReference>
<dbReference type="SFLD" id="SFLDS00001">
    <property type="entry name" value="Enolase"/>
    <property type="match status" value="1"/>
</dbReference>
<dbReference type="SFLD" id="SFLDF00002">
    <property type="entry name" value="enolase"/>
    <property type="match status" value="1"/>
</dbReference>
<dbReference type="SMART" id="SM01192">
    <property type="entry name" value="Enolase_C"/>
    <property type="match status" value="1"/>
</dbReference>
<dbReference type="SMART" id="SM01193">
    <property type="entry name" value="Enolase_N"/>
    <property type="match status" value="1"/>
</dbReference>
<dbReference type="SUPFAM" id="SSF51604">
    <property type="entry name" value="Enolase C-terminal domain-like"/>
    <property type="match status" value="1"/>
</dbReference>
<dbReference type="SUPFAM" id="SSF54826">
    <property type="entry name" value="Enolase N-terminal domain-like"/>
    <property type="match status" value="1"/>
</dbReference>
<dbReference type="PROSITE" id="PS00164">
    <property type="entry name" value="ENOLASE"/>
    <property type="match status" value="1"/>
</dbReference>
<keyword id="KW-0963">Cytoplasm</keyword>
<keyword id="KW-0324">Glycolysis</keyword>
<keyword id="KW-0456">Lyase</keyword>
<keyword id="KW-0460">Magnesium</keyword>
<keyword id="KW-0479">Metal-binding</keyword>
<keyword id="KW-1185">Reference proteome</keyword>
<keyword id="KW-0964">Secreted</keyword>
<evidence type="ECO:0000255" key="1">
    <source>
        <dbReference type="HAMAP-Rule" id="MF_00318"/>
    </source>
</evidence>
<reference key="1">
    <citation type="journal article" date="2001" name="DNA Res.">
        <title>Complete genomic sequence of the filamentous nitrogen-fixing cyanobacterium Anabaena sp. strain PCC 7120.</title>
        <authorList>
            <person name="Kaneko T."/>
            <person name="Nakamura Y."/>
            <person name="Wolk C.P."/>
            <person name="Kuritz T."/>
            <person name="Sasamoto S."/>
            <person name="Watanabe A."/>
            <person name="Iriguchi M."/>
            <person name="Ishikawa A."/>
            <person name="Kawashima K."/>
            <person name="Kimura T."/>
            <person name="Kishida Y."/>
            <person name="Kohara M."/>
            <person name="Matsumoto M."/>
            <person name="Matsuno A."/>
            <person name="Muraki A."/>
            <person name="Nakazaki N."/>
            <person name="Shimpo S."/>
            <person name="Sugimoto M."/>
            <person name="Takazawa M."/>
            <person name="Yamada M."/>
            <person name="Yasuda M."/>
            <person name="Tabata S."/>
        </authorList>
    </citation>
    <scope>NUCLEOTIDE SEQUENCE [LARGE SCALE GENOMIC DNA]</scope>
    <source>
        <strain>PCC 7120 / SAG 25.82 / UTEX 2576</strain>
    </source>
</reference>
<protein>
    <recommendedName>
        <fullName evidence="1">Enolase</fullName>
        <ecNumber evidence="1">4.2.1.11</ecNumber>
    </recommendedName>
    <alternativeName>
        <fullName evidence="1">2-phospho-D-glycerate hydro-lyase</fullName>
    </alternativeName>
    <alternativeName>
        <fullName evidence="1">2-phosphoglycerate dehydratase</fullName>
    </alternativeName>
</protein>
<feature type="chain" id="PRO_0000133830" description="Enolase">
    <location>
        <begin position="1"/>
        <end position="429"/>
    </location>
</feature>
<feature type="active site" description="Proton donor" evidence="1">
    <location>
        <position position="210"/>
    </location>
</feature>
<feature type="active site" description="Proton acceptor" evidence="1">
    <location>
        <position position="340"/>
    </location>
</feature>
<feature type="binding site" evidence="1">
    <location>
        <position position="168"/>
    </location>
    <ligand>
        <name>(2R)-2-phosphoglycerate</name>
        <dbReference type="ChEBI" id="CHEBI:58289"/>
    </ligand>
</feature>
<feature type="binding site" evidence="1">
    <location>
        <position position="247"/>
    </location>
    <ligand>
        <name>Mg(2+)</name>
        <dbReference type="ChEBI" id="CHEBI:18420"/>
    </ligand>
</feature>
<feature type="binding site" evidence="1">
    <location>
        <position position="288"/>
    </location>
    <ligand>
        <name>Mg(2+)</name>
        <dbReference type="ChEBI" id="CHEBI:18420"/>
    </ligand>
</feature>
<feature type="binding site" evidence="1">
    <location>
        <position position="315"/>
    </location>
    <ligand>
        <name>Mg(2+)</name>
        <dbReference type="ChEBI" id="CHEBI:18420"/>
    </ligand>
</feature>
<feature type="binding site" evidence="1">
    <location>
        <position position="340"/>
    </location>
    <ligand>
        <name>(2R)-2-phosphoglycerate</name>
        <dbReference type="ChEBI" id="CHEBI:58289"/>
    </ligand>
</feature>
<feature type="binding site" evidence="1">
    <location>
        <position position="369"/>
    </location>
    <ligand>
        <name>(2R)-2-phosphoglycerate</name>
        <dbReference type="ChEBI" id="CHEBI:58289"/>
    </ligand>
</feature>
<feature type="binding site" evidence="1">
    <location>
        <position position="370"/>
    </location>
    <ligand>
        <name>(2R)-2-phosphoglycerate</name>
        <dbReference type="ChEBI" id="CHEBI:58289"/>
    </ligand>
</feature>
<feature type="binding site" evidence="1">
    <location>
        <position position="391"/>
    </location>
    <ligand>
        <name>(2R)-2-phosphoglycerate</name>
        <dbReference type="ChEBI" id="CHEBI:58289"/>
    </ligand>
</feature>
<gene>
    <name evidence="1" type="primary">eno</name>
    <name type="ordered locus">all3538</name>
</gene>
<sequence>MNNIVDTAIEAIVAREILDSRGRPTIEAEVHLLSGAVGLAQVPSGASTGTFEAHELRDKDKSRYGGKGVLKAVHNVNEILAPKLIDLDALNQELIDRTMIALDGSGNKSNLGANAILAVSLAAARAGAESLGIPLYRYLGGPLANLLPVPLMNVINGGAHASNNVDFQEFMIVPVGATSFREALRWGAEVFATLSEVLHDKGLLTGVGDEGGFAPNLESNQVALELLVAAIEKAGYKPGEQVALALDVAASEFYKEGQYVYDGRPHAPTEFIDYLGQLVDQYPIVSIEDGLHEEDWQHWQLLTQKVGSRVQLVGDDLFVTNATRLQKGIQEKAGNAILIKLNQIGSLTETLETIDLGTRNGFRSVISHRSGETEDTTIADLAVATRAGQIKTGSLCRSERVAKYNRLLRIEDELGDRAVYAGAVGLGPK</sequence>
<accession>Q8YRB0</accession>
<name>ENO_NOSS1</name>
<proteinExistence type="inferred from homology"/>
<comment type="function">
    <text evidence="1">Catalyzes the reversible conversion of 2-phosphoglycerate (2-PG) into phosphoenolpyruvate (PEP). It is essential for the degradation of carbohydrates via glycolysis.</text>
</comment>
<comment type="catalytic activity">
    <reaction evidence="1">
        <text>(2R)-2-phosphoglycerate = phosphoenolpyruvate + H2O</text>
        <dbReference type="Rhea" id="RHEA:10164"/>
        <dbReference type="ChEBI" id="CHEBI:15377"/>
        <dbReference type="ChEBI" id="CHEBI:58289"/>
        <dbReference type="ChEBI" id="CHEBI:58702"/>
        <dbReference type="EC" id="4.2.1.11"/>
    </reaction>
</comment>
<comment type="cofactor">
    <cofactor evidence="1">
        <name>Mg(2+)</name>
        <dbReference type="ChEBI" id="CHEBI:18420"/>
    </cofactor>
    <text evidence="1">Binds a second Mg(2+) ion via substrate during catalysis.</text>
</comment>
<comment type="pathway">
    <text evidence="1">Carbohydrate degradation; glycolysis; pyruvate from D-glyceraldehyde 3-phosphate: step 4/5.</text>
</comment>
<comment type="subcellular location">
    <subcellularLocation>
        <location evidence="1">Cytoplasm</location>
    </subcellularLocation>
    <subcellularLocation>
        <location evidence="1">Secreted</location>
    </subcellularLocation>
    <subcellularLocation>
        <location evidence="1">Cell surface</location>
    </subcellularLocation>
    <text evidence="1">Fractions of enolase are present in both the cytoplasm and on the cell surface.</text>
</comment>
<comment type="similarity">
    <text evidence="1">Belongs to the enolase family.</text>
</comment>